<gene>
    <name evidence="1" type="primary">ccsA</name>
</gene>
<name>CCSA_ATRBE</name>
<organism>
    <name type="scientific">Atropa belladonna</name>
    <name type="common">Belladonna</name>
    <name type="synonym">Deadly nightshade</name>
    <dbReference type="NCBI Taxonomy" id="33113"/>
    <lineage>
        <taxon>Eukaryota</taxon>
        <taxon>Viridiplantae</taxon>
        <taxon>Streptophyta</taxon>
        <taxon>Embryophyta</taxon>
        <taxon>Tracheophyta</taxon>
        <taxon>Spermatophyta</taxon>
        <taxon>Magnoliopsida</taxon>
        <taxon>eudicotyledons</taxon>
        <taxon>Gunneridae</taxon>
        <taxon>Pentapetalae</taxon>
        <taxon>asterids</taxon>
        <taxon>lamiids</taxon>
        <taxon>Solanales</taxon>
        <taxon>Solanaceae</taxon>
        <taxon>Solanoideae</taxon>
        <taxon>Hyoscyameae</taxon>
        <taxon>Atropa</taxon>
    </lineage>
</organism>
<keyword id="KW-0150">Chloroplast</keyword>
<keyword id="KW-0201">Cytochrome c-type biogenesis</keyword>
<keyword id="KW-0472">Membrane</keyword>
<keyword id="KW-0934">Plastid</keyword>
<keyword id="KW-0793">Thylakoid</keyword>
<keyword id="KW-0812">Transmembrane</keyword>
<keyword id="KW-1133">Transmembrane helix</keyword>
<proteinExistence type="inferred from homology"/>
<dbReference type="EMBL" id="AJ316582">
    <property type="protein sequence ID" value="CAC88095.1"/>
    <property type="molecule type" value="Genomic_DNA"/>
</dbReference>
<dbReference type="RefSeq" id="NP_783281.1">
    <property type="nucleotide sequence ID" value="NC_004561.1"/>
</dbReference>
<dbReference type="SMR" id="Q8S8U8"/>
<dbReference type="GeneID" id="806511"/>
<dbReference type="GO" id="GO:0009535">
    <property type="term" value="C:chloroplast thylakoid membrane"/>
    <property type="evidence" value="ECO:0007669"/>
    <property type="project" value="UniProtKB-SubCell"/>
</dbReference>
<dbReference type="GO" id="GO:0005886">
    <property type="term" value="C:plasma membrane"/>
    <property type="evidence" value="ECO:0007669"/>
    <property type="project" value="TreeGrafter"/>
</dbReference>
<dbReference type="GO" id="GO:0020037">
    <property type="term" value="F:heme binding"/>
    <property type="evidence" value="ECO:0007669"/>
    <property type="project" value="InterPro"/>
</dbReference>
<dbReference type="GO" id="GO:0017004">
    <property type="term" value="P:cytochrome complex assembly"/>
    <property type="evidence" value="ECO:0007669"/>
    <property type="project" value="UniProtKB-UniRule"/>
</dbReference>
<dbReference type="HAMAP" id="MF_01391">
    <property type="entry name" value="CytC_CcsA"/>
    <property type="match status" value="1"/>
</dbReference>
<dbReference type="InterPro" id="IPR002541">
    <property type="entry name" value="Cyt_c_assembly"/>
</dbReference>
<dbReference type="InterPro" id="IPR017562">
    <property type="entry name" value="Cyt_c_biogenesis_CcsA"/>
</dbReference>
<dbReference type="InterPro" id="IPR045062">
    <property type="entry name" value="Cyt_c_biogenesis_CcsA/CcmC"/>
</dbReference>
<dbReference type="NCBIfam" id="TIGR03144">
    <property type="entry name" value="cytochr_II_ccsB"/>
    <property type="match status" value="1"/>
</dbReference>
<dbReference type="PANTHER" id="PTHR30071:SF1">
    <property type="entry name" value="CYTOCHROME B_B6 PROTEIN-RELATED"/>
    <property type="match status" value="1"/>
</dbReference>
<dbReference type="PANTHER" id="PTHR30071">
    <property type="entry name" value="HEME EXPORTER PROTEIN C"/>
    <property type="match status" value="1"/>
</dbReference>
<dbReference type="Pfam" id="PF01578">
    <property type="entry name" value="Cytochrom_C_asm"/>
    <property type="match status" value="1"/>
</dbReference>
<comment type="function">
    <text evidence="1">Required during biogenesis of c-type cytochromes (cytochrome c6 and cytochrome f) at the step of heme attachment.</text>
</comment>
<comment type="subunit">
    <text evidence="1">May interact with Ccs1.</text>
</comment>
<comment type="subcellular location">
    <subcellularLocation>
        <location evidence="1">Plastid</location>
        <location evidence="1">Chloroplast thylakoid membrane</location>
        <topology evidence="1">Multi-pass membrane protein</topology>
    </subcellularLocation>
</comment>
<comment type="similarity">
    <text evidence="1">Belongs to the CcmF/CycK/Ccl1/NrfE/CcsA family.</text>
</comment>
<feature type="chain" id="PRO_0000353732" description="Cytochrome c biogenesis protein CcsA">
    <location>
        <begin position="1"/>
        <end position="312"/>
    </location>
</feature>
<feature type="transmembrane region" description="Helical" evidence="1">
    <location>
        <begin position="9"/>
        <end position="29"/>
    </location>
</feature>
<feature type="transmembrane region" description="Helical" evidence="1">
    <location>
        <begin position="44"/>
        <end position="64"/>
    </location>
</feature>
<feature type="transmembrane region" description="Helical" evidence="1">
    <location>
        <begin position="71"/>
        <end position="91"/>
    </location>
</feature>
<feature type="transmembrane region" description="Helical" evidence="1">
    <location>
        <begin position="111"/>
        <end position="131"/>
    </location>
</feature>
<feature type="transmembrane region" description="Helical" evidence="1">
    <location>
        <begin position="143"/>
        <end position="163"/>
    </location>
</feature>
<feature type="transmembrane region" description="Helical" evidence="1">
    <location>
        <begin position="216"/>
        <end position="236"/>
    </location>
</feature>
<feature type="transmembrane region" description="Helical" evidence="1">
    <location>
        <begin position="251"/>
        <end position="271"/>
    </location>
</feature>
<feature type="transmembrane region" description="Helical" evidence="1">
    <location>
        <begin position="277"/>
        <end position="297"/>
    </location>
</feature>
<reference key="1">
    <citation type="journal article" date="2002" name="Mol. Biol. Evol.">
        <title>The plastid chromosome of Atropa belladonna and its comparison with that of Nicotiana tabacum: the role of RNA editing in generating divergence in the process of plant speciation.</title>
        <authorList>
            <person name="Schmitz-Linneweber C."/>
            <person name="Regel R."/>
            <person name="Du T.G."/>
            <person name="Hupfer H."/>
            <person name="Herrmann R.G."/>
            <person name="Maier R.M."/>
        </authorList>
    </citation>
    <scope>NUCLEOTIDE SEQUENCE [LARGE SCALE GENOMIC DNA]</scope>
    <source>
        <strain>cv. Ab5p(kan)</strain>
    </source>
</reference>
<accession>Q8S8U8</accession>
<evidence type="ECO:0000255" key="1">
    <source>
        <dbReference type="HAMAP-Rule" id="MF_01391"/>
    </source>
</evidence>
<sequence length="312" mass="35297">MIFSTLEHILTHISFSIVSIVITIHLITFLVDEIVKLYDSSEKGIIVTFFCITGLLVTRWISSGHFPLSDLYESLIFLSWSFSLIHIIPYFKNNVLILSKITGPSAIFTQGFATSGILTEIHQSGILVPALQSEWLIMHVSMMILGYAALLCGSLLSVALLVITFRKNRKLFYKSNGFVNESFLLGENVLENTSFSAKNYYRSQLIQQLDYWSYRVISLGFTFLTIGILSGAVWANEAWGSYWNWDPKETWAFITWIVFAIYLHTRTNINLRGANSAIIATIGFLIIWICYFGVNLLGIGLHSYGSFTSTFN</sequence>
<protein>
    <recommendedName>
        <fullName evidence="1">Cytochrome c biogenesis protein CcsA</fullName>
    </recommendedName>
</protein>
<geneLocation type="chloroplast"/>